<accession>A0A023FFB5</accession>
<feature type="signal peptide" evidence="2">
    <location>
        <begin position="1"/>
        <end position="21"/>
    </location>
</feature>
<feature type="chain" id="PRO_5001515403" description="Evasin P983" evidence="2">
    <location>
        <begin position="22"/>
        <end position="119"/>
    </location>
</feature>
<feature type="glycosylation site" description="N-linked (GlcNAc...) asparagine" evidence="3">
    <location>
        <position position="48"/>
    </location>
</feature>
<feature type="glycosylation site" description="N-linked (GlcNAc...) asparagine" evidence="3">
    <location>
        <position position="67"/>
    </location>
</feature>
<feature type="disulfide bond" evidence="1">
    <location>
        <begin position="37"/>
        <end position="59"/>
    </location>
</feature>
<feature type="disulfide bond" evidence="1">
    <location>
        <begin position="55"/>
        <end position="97"/>
    </location>
</feature>
<feature type="disulfide bond" evidence="1">
    <location>
        <begin position="72"/>
        <end position="102"/>
    </location>
</feature>
<feature type="disulfide bond" evidence="1">
    <location>
        <begin position="92"/>
        <end position="111"/>
    </location>
</feature>
<reference evidence="7" key="1">
    <citation type="journal article" date="2014" name="Parasit. Vectors">
        <title>The sialotranscriptome of Amblyomma triste, Amblyomma parvum and Amblyomma cajennense ticks, uncovered by 454-based RNA-seq.</title>
        <authorList>
            <person name="Garcia G.R."/>
            <person name="Gardinassi L.G."/>
            <person name="Ribeiro J.M."/>
            <person name="Anatriello E."/>
            <person name="Ferreira B.R."/>
            <person name="Moreira H.N."/>
            <person name="Mafra C."/>
            <person name="Martins M.M."/>
            <person name="Szabo M.P."/>
            <person name="de Miranda-Santos I.K."/>
            <person name="Maruyama S.R."/>
        </authorList>
    </citation>
    <scope>NUCLEOTIDE SEQUENCE [LARGE SCALE MRNA]</scope>
    <source>
        <strain evidence="7">Uberlandia</strain>
        <tissue evidence="7">Salivary gland</tissue>
    </source>
</reference>
<reference evidence="6" key="2">
    <citation type="journal article" date="2017" name="Sci. Rep.">
        <title>Yeast surface display identifies a family of evasins from ticks with novel polyvalent CC chemokine-binding activities.</title>
        <authorList>
            <person name="Singh K."/>
            <person name="Davies G."/>
            <person name="Alenazi Y."/>
            <person name="Eaton J.R.O."/>
            <person name="Kawamura A."/>
            <person name="Bhattacharya S."/>
        </authorList>
    </citation>
    <scope>FUNCTION</scope>
</reference>
<evidence type="ECO:0000250" key="1">
    <source>
        <dbReference type="UniProtKB" id="P0C8E7"/>
    </source>
</evidence>
<evidence type="ECO:0000255" key="2"/>
<evidence type="ECO:0000255" key="3">
    <source>
        <dbReference type="PROSITE-ProRule" id="PRU00498"/>
    </source>
</evidence>
<evidence type="ECO:0000269" key="4">
    <source>
    </source>
</evidence>
<evidence type="ECO:0000303" key="5">
    <source>
    </source>
</evidence>
<evidence type="ECO:0000305" key="6"/>
<evidence type="ECO:0000312" key="7">
    <source>
        <dbReference type="EMBL" id="JAC19634.1"/>
    </source>
</evidence>
<proteinExistence type="inferred from homology"/>
<name>EV983_AMBCJ</name>
<organism>
    <name type="scientific">Amblyomma cajennense</name>
    <name type="common">Cayenne tick</name>
    <name type="synonym">Acarus cajennensis</name>
    <dbReference type="NCBI Taxonomy" id="34607"/>
    <lineage>
        <taxon>Eukaryota</taxon>
        <taxon>Metazoa</taxon>
        <taxon>Ecdysozoa</taxon>
        <taxon>Arthropoda</taxon>
        <taxon>Chelicerata</taxon>
        <taxon>Arachnida</taxon>
        <taxon>Acari</taxon>
        <taxon>Parasitiformes</taxon>
        <taxon>Ixodida</taxon>
        <taxon>Ixodoidea</taxon>
        <taxon>Ixodidae</taxon>
        <taxon>Amblyomminae</taxon>
        <taxon>Amblyomma</taxon>
    </lineage>
</organism>
<protein>
    <recommendedName>
        <fullName evidence="5">Evasin P983</fullName>
    </recommendedName>
</protein>
<comment type="function">
    <text evidence="4">Salivary chemokine-binding protein which binds to host chemokines CCL2, CCL3 and CCL8.</text>
</comment>
<comment type="subcellular location">
    <subcellularLocation>
        <location evidence="6">Secreted</location>
    </subcellularLocation>
</comment>
<comment type="sequence caution" evidence="6">
    <conflict type="erroneous initiation">
        <sequence resource="EMBL-CDS" id="JAC19634"/>
    </conflict>
    <text>Extended N-terminus.</text>
</comment>
<sequence>MKASFCVIASCLVVFALKGTAEDTGTEDDFDYGNTGCPFPVLGNYKSNMTKPVGCKNKCGSGYEVLNDTTPCYVIDQKVFNNMVPLRQYSKCPLGFCENGECKPNDQAEDCYKGREEQK</sequence>
<keyword id="KW-1015">Disulfide bond</keyword>
<keyword id="KW-0325">Glycoprotein</keyword>
<keyword id="KW-0964">Secreted</keyword>
<keyword id="KW-0732">Signal</keyword>
<dbReference type="EMBL" id="GBBK01004848">
    <property type="protein sequence ID" value="JAC19634.1"/>
    <property type="status" value="ALT_INIT"/>
    <property type="molecule type" value="mRNA"/>
</dbReference>
<dbReference type="SMR" id="A0A023FFB5"/>
<dbReference type="GO" id="GO:0005576">
    <property type="term" value="C:extracellular region"/>
    <property type="evidence" value="ECO:0007669"/>
    <property type="project" value="UniProtKB-SubCell"/>
</dbReference>
<dbReference type="GO" id="GO:0019957">
    <property type="term" value="F:C-C chemokine binding"/>
    <property type="evidence" value="ECO:0000314"/>
    <property type="project" value="UniProtKB"/>
</dbReference>
<dbReference type="Gene3D" id="2.30.130.100">
    <property type="match status" value="1"/>
</dbReference>
<dbReference type="InterPro" id="IPR045797">
    <property type="entry name" value="EVA_Class_A"/>
</dbReference>
<dbReference type="Pfam" id="PF19429">
    <property type="entry name" value="EVA_Class_A"/>
    <property type="match status" value="1"/>
</dbReference>